<gene>
    <name type="primary">Rnf13</name>
    <name evidence="7" type="synonym">Rzf</name>
</gene>
<organism>
    <name type="scientific">Mus musculus</name>
    <name type="common">Mouse</name>
    <dbReference type="NCBI Taxonomy" id="10090"/>
    <lineage>
        <taxon>Eukaryota</taxon>
        <taxon>Metazoa</taxon>
        <taxon>Chordata</taxon>
        <taxon>Craniata</taxon>
        <taxon>Vertebrata</taxon>
        <taxon>Euteleostomi</taxon>
        <taxon>Mammalia</taxon>
        <taxon>Eutheria</taxon>
        <taxon>Euarchontoglires</taxon>
        <taxon>Glires</taxon>
        <taxon>Rodentia</taxon>
        <taxon>Myomorpha</taxon>
        <taxon>Muroidea</taxon>
        <taxon>Muridae</taxon>
        <taxon>Murinae</taxon>
        <taxon>Mus</taxon>
        <taxon>Mus</taxon>
    </lineage>
</organism>
<proteinExistence type="evidence at protein level"/>
<comment type="function">
    <text evidence="1 5">E3 ubiquitin-protein ligase that regulates cell proliferation (PubMed:19292867). Involved in apoptosis regulation (By similarity). Mediates ER stress-induced activation of JNK signaling pathway and apoptosis by promoting ERN1 activation and splicing of XBP1 mRNA (By similarity). Also involved in protein trafficking and localization (By similarity).</text>
</comment>
<comment type="catalytic activity">
    <reaction evidence="5">
        <text>S-ubiquitinyl-[E2 ubiquitin-conjugating enzyme]-L-cysteine + [acceptor protein]-L-lysine = [E2 ubiquitin-conjugating enzyme]-L-cysteine + N(6)-ubiquitinyl-[acceptor protein]-L-lysine.</text>
        <dbReference type="EC" id="2.3.2.27"/>
    </reaction>
</comment>
<comment type="pathway">
    <text evidence="5">Protein modification; protein ubiquitination.</text>
</comment>
<comment type="subunit">
    <text evidence="1">Interacts with ERN1.</text>
</comment>
<comment type="subcellular location">
    <subcellularLocation>
        <location evidence="1">Endoplasmic reticulum membrane</location>
        <topology evidence="2">Single-pass type I membrane protein</topology>
    </subcellularLocation>
    <subcellularLocation>
        <location evidence="5">Late endosome membrane</location>
        <topology evidence="2">Single-pass type I membrane protein</topology>
    </subcellularLocation>
    <subcellularLocation>
        <location evidence="5">Lysosome membrane</location>
        <topology evidence="2">Single-pass type I membrane protein</topology>
    </subcellularLocation>
    <subcellularLocation>
        <location evidence="6">Nucleus inner membrane</location>
        <topology evidence="2">Single-pass type I membrane protein</topology>
    </subcellularLocation>
    <text evidence="6">The mature protein is subjected to extensive proteolysis that leads to the shedding of the ectodomain into the lumen of vesicles and the release of the C-terminal fragment into the cytosol (PubMed:20230530). Not detected in early endosomes (PubMed:20230530). Treatment of the cells with either PMA or ionomycin stabilizes the full-length protein which relocalizes to recycling endosomes and to the inner nuclear membrane (PubMed:20230530).</text>
</comment>
<comment type="alternative products">
    <event type="alternative splicing"/>
    <isoform>
        <id>O54965-1</id>
        <name>1</name>
        <sequence type="displayed"/>
    </isoform>
    <isoform>
        <id>O54965-2</id>
        <name>2</name>
        <sequence type="described" ref="VSP_005749 VSP_005750"/>
    </isoform>
</comment>
<comment type="tissue specificity">
    <text evidence="5">Expressed in the brain, heart, kidney, liver and spleen. Higher expression in adult tissues compared to the embryonic counterparts.</text>
</comment>
<comment type="domain">
    <text evidence="1">The RING-type zinc finger domain is required for E3 ligase activity and for promoting ER stress-induced JNK activation and apoptosis.</text>
</comment>
<comment type="PTM">
    <text evidence="5">Autoubiquitinated.</text>
</comment>
<comment type="PTM">
    <text evidence="5">N-glycosylated and also modified with chondroitin sulfate.</text>
</comment>
<protein>
    <recommendedName>
        <fullName>E3 ubiquitin-protein ligase RNF13</fullName>
        <ecNumber evidence="5">2.3.2.27</ecNumber>
    </recommendedName>
    <alternativeName>
        <fullName>RING finger protein 13</fullName>
    </alternativeName>
</protein>
<feature type="signal peptide" evidence="2">
    <location>
        <begin position="1"/>
        <end position="34"/>
    </location>
</feature>
<feature type="chain" id="PRO_0000056055" description="E3 ubiquitin-protein ligase RNF13">
    <location>
        <begin position="35"/>
        <end position="381"/>
    </location>
</feature>
<feature type="topological domain" description="Lumenal" evidence="2">
    <location>
        <begin position="35"/>
        <end position="182"/>
    </location>
</feature>
<feature type="transmembrane region" description="Helical" evidence="2">
    <location>
        <begin position="183"/>
        <end position="203"/>
    </location>
</feature>
<feature type="topological domain" description="Cytoplasmic" evidence="2">
    <location>
        <begin position="204"/>
        <end position="381"/>
    </location>
</feature>
<feature type="domain" description="PA">
    <location>
        <begin position="64"/>
        <end position="160"/>
    </location>
</feature>
<feature type="zinc finger region" description="RING-type; atypical" evidence="3">
    <location>
        <begin position="240"/>
        <end position="282"/>
    </location>
</feature>
<feature type="region of interest" description="Disordered" evidence="4">
    <location>
        <begin position="285"/>
        <end position="381"/>
    </location>
</feature>
<feature type="compositionally biased region" description="Polar residues" evidence="4">
    <location>
        <begin position="317"/>
        <end position="328"/>
    </location>
</feature>
<feature type="compositionally biased region" description="Acidic residues" evidence="4">
    <location>
        <begin position="339"/>
        <end position="357"/>
    </location>
</feature>
<feature type="compositionally biased region" description="Polar residues" evidence="4">
    <location>
        <begin position="365"/>
        <end position="381"/>
    </location>
</feature>
<feature type="glycosylation site" description="N-linked (GlcNAc...) asparagine" evidence="2">
    <location>
        <position position="88"/>
    </location>
</feature>
<feature type="splice variant" id="VSP_005749" description="In isoform 2." evidence="7">
    <original>AYHCKCVD</original>
    <variation>GMSTHTVL</variation>
    <location>
        <begin position="261"/>
        <end position="268"/>
    </location>
</feature>
<feature type="splice variant" id="VSP_005750" description="In isoform 2." evidence="7">
    <location>
        <begin position="269"/>
        <end position="381"/>
    </location>
</feature>
<feature type="mutagenesis site" description="Loss of E3 ligase activity." evidence="5">
    <original>C</original>
    <variation>A</variation>
    <location>
        <position position="266"/>
    </location>
</feature>
<feature type="sequence conflict" description="In Ref. 1; AAC03770." evidence="8" ref="1">
    <original>S</original>
    <variation>I</variation>
    <location>
        <position position="362"/>
    </location>
</feature>
<keyword id="KW-0025">Alternative splicing</keyword>
<keyword id="KW-0256">Endoplasmic reticulum</keyword>
<keyword id="KW-0967">Endosome</keyword>
<keyword id="KW-0325">Glycoprotein</keyword>
<keyword id="KW-0458">Lysosome</keyword>
<keyword id="KW-0472">Membrane</keyword>
<keyword id="KW-0479">Metal-binding</keyword>
<keyword id="KW-0539">Nucleus</keyword>
<keyword id="KW-1185">Reference proteome</keyword>
<keyword id="KW-0732">Signal</keyword>
<keyword id="KW-0808">Transferase</keyword>
<keyword id="KW-0812">Transmembrane</keyword>
<keyword id="KW-1133">Transmembrane helix</keyword>
<keyword id="KW-0832">Ubl conjugation</keyword>
<keyword id="KW-0833">Ubl conjugation pathway</keyword>
<keyword id="KW-0862">Zinc</keyword>
<keyword id="KW-0863">Zinc-finger</keyword>
<sequence>MLLSIGMLMLSATQVYTILTVQLFAFLNLLPVEADILAYNFENASQTFEDLPARFGYRLPAEGLKGFLINSKPENACEPIVPPPLKDNSSGTFIVLIRRLDCNFDIKVLNAQRAGYKAAIVHNVDSDDLISMGSNDIDTLKKIDIPSVFIGESSANSLKDEFTYEKGGHIILVPELSLPLEYYLIPFLIIVGICLILIVIFMITKFVQDRHRNRRNRLRKDQLKKLPVHKFKKGDEYDVCAICLEEYEDGDKLRILPCSHAYHCKCVDPWLTKTKKTCPVCKQKVVPSQGDSDSDTDSSQEENQVSEHTPLLPPSASARTQSFGSLSESHSHHNMTESSDYEDDDNEETDSSDADNEITDHSVVVQLQPNGEQDYNIANTV</sequence>
<evidence type="ECO:0000250" key="1">
    <source>
        <dbReference type="UniProtKB" id="O43567"/>
    </source>
</evidence>
<evidence type="ECO:0000255" key="2"/>
<evidence type="ECO:0000255" key="3">
    <source>
        <dbReference type="PROSITE-ProRule" id="PRU00175"/>
    </source>
</evidence>
<evidence type="ECO:0000256" key="4">
    <source>
        <dbReference type="SAM" id="MobiDB-lite"/>
    </source>
</evidence>
<evidence type="ECO:0000269" key="5">
    <source>
    </source>
</evidence>
<evidence type="ECO:0000269" key="6">
    <source>
    </source>
</evidence>
<evidence type="ECO:0000303" key="7">
    <source ref="1"/>
</evidence>
<evidence type="ECO:0000305" key="8"/>
<accession>O54965</accession>
<accession>O54966</accession>
<accession>Q6PEA8</accession>
<name>RNF13_MOUSE</name>
<reference key="1">
    <citation type="journal article" date="1998" name="Prim. Sens. Neuron">
        <title>The gene for a RING zinc finger protein is expressed in the inner chick ear after noise exposure.</title>
        <authorList>
            <person name="Lomax M.I."/>
            <person name="Warner S.J."/>
            <person name="Bersirli C.G."/>
            <person name="Gong T.-W.L."/>
        </authorList>
    </citation>
    <scope>NUCLEOTIDE SEQUENCE [MRNA] (ISOFORMS 1 AND 2)</scope>
</reference>
<reference key="2">
    <citation type="journal article" date="2005" name="Science">
        <title>The transcriptional landscape of the mammalian genome.</title>
        <authorList>
            <person name="Carninci P."/>
            <person name="Kasukawa T."/>
            <person name="Katayama S."/>
            <person name="Gough J."/>
            <person name="Frith M.C."/>
            <person name="Maeda N."/>
            <person name="Oyama R."/>
            <person name="Ravasi T."/>
            <person name="Lenhard B."/>
            <person name="Wells C."/>
            <person name="Kodzius R."/>
            <person name="Shimokawa K."/>
            <person name="Bajic V.B."/>
            <person name="Brenner S.E."/>
            <person name="Batalov S."/>
            <person name="Forrest A.R."/>
            <person name="Zavolan M."/>
            <person name="Davis M.J."/>
            <person name="Wilming L.G."/>
            <person name="Aidinis V."/>
            <person name="Allen J.E."/>
            <person name="Ambesi-Impiombato A."/>
            <person name="Apweiler R."/>
            <person name="Aturaliya R.N."/>
            <person name="Bailey T.L."/>
            <person name="Bansal M."/>
            <person name="Baxter L."/>
            <person name="Beisel K.W."/>
            <person name="Bersano T."/>
            <person name="Bono H."/>
            <person name="Chalk A.M."/>
            <person name="Chiu K.P."/>
            <person name="Choudhary V."/>
            <person name="Christoffels A."/>
            <person name="Clutterbuck D.R."/>
            <person name="Crowe M.L."/>
            <person name="Dalla E."/>
            <person name="Dalrymple B.P."/>
            <person name="de Bono B."/>
            <person name="Della Gatta G."/>
            <person name="di Bernardo D."/>
            <person name="Down T."/>
            <person name="Engstrom P."/>
            <person name="Fagiolini M."/>
            <person name="Faulkner G."/>
            <person name="Fletcher C.F."/>
            <person name="Fukushima T."/>
            <person name="Furuno M."/>
            <person name="Futaki S."/>
            <person name="Gariboldi M."/>
            <person name="Georgii-Hemming P."/>
            <person name="Gingeras T.R."/>
            <person name="Gojobori T."/>
            <person name="Green R.E."/>
            <person name="Gustincich S."/>
            <person name="Harbers M."/>
            <person name="Hayashi Y."/>
            <person name="Hensch T.K."/>
            <person name="Hirokawa N."/>
            <person name="Hill D."/>
            <person name="Huminiecki L."/>
            <person name="Iacono M."/>
            <person name="Ikeo K."/>
            <person name="Iwama A."/>
            <person name="Ishikawa T."/>
            <person name="Jakt M."/>
            <person name="Kanapin A."/>
            <person name="Katoh M."/>
            <person name="Kawasawa Y."/>
            <person name="Kelso J."/>
            <person name="Kitamura H."/>
            <person name="Kitano H."/>
            <person name="Kollias G."/>
            <person name="Krishnan S.P."/>
            <person name="Kruger A."/>
            <person name="Kummerfeld S.K."/>
            <person name="Kurochkin I.V."/>
            <person name="Lareau L.F."/>
            <person name="Lazarevic D."/>
            <person name="Lipovich L."/>
            <person name="Liu J."/>
            <person name="Liuni S."/>
            <person name="McWilliam S."/>
            <person name="Madan Babu M."/>
            <person name="Madera M."/>
            <person name="Marchionni L."/>
            <person name="Matsuda H."/>
            <person name="Matsuzawa S."/>
            <person name="Miki H."/>
            <person name="Mignone F."/>
            <person name="Miyake S."/>
            <person name="Morris K."/>
            <person name="Mottagui-Tabar S."/>
            <person name="Mulder N."/>
            <person name="Nakano N."/>
            <person name="Nakauchi H."/>
            <person name="Ng P."/>
            <person name="Nilsson R."/>
            <person name="Nishiguchi S."/>
            <person name="Nishikawa S."/>
            <person name="Nori F."/>
            <person name="Ohara O."/>
            <person name="Okazaki Y."/>
            <person name="Orlando V."/>
            <person name="Pang K.C."/>
            <person name="Pavan W.J."/>
            <person name="Pavesi G."/>
            <person name="Pesole G."/>
            <person name="Petrovsky N."/>
            <person name="Piazza S."/>
            <person name="Reed J."/>
            <person name="Reid J.F."/>
            <person name="Ring B.Z."/>
            <person name="Ringwald M."/>
            <person name="Rost B."/>
            <person name="Ruan Y."/>
            <person name="Salzberg S.L."/>
            <person name="Sandelin A."/>
            <person name="Schneider C."/>
            <person name="Schoenbach C."/>
            <person name="Sekiguchi K."/>
            <person name="Semple C.A."/>
            <person name="Seno S."/>
            <person name="Sessa L."/>
            <person name="Sheng Y."/>
            <person name="Shibata Y."/>
            <person name="Shimada H."/>
            <person name="Shimada K."/>
            <person name="Silva D."/>
            <person name="Sinclair B."/>
            <person name="Sperling S."/>
            <person name="Stupka E."/>
            <person name="Sugiura K."/>
            <person name="Sultana R."/>
            <person name="Takenaka Y."/>
            <person name="Taki K."/>
            <person name="Tammoja K."/>
            <person name="Tan S.L."/>
            <person name="Tang S."/>
            <person name="Taylor M.S."/>
            <person name="Tegner J."/>
            <person name="Teichmann S.A."/>
            <person name="Ueda H.R."/>
            <person name="van Nimwegen E."/>
            <person name="Verardo R."/>
            <person name="Wei C.L."/>
            <person name="Yagi K."/>
            <person name="Yamanishi H."/>
            <person name="Zabarovsky E."/>
            <person name="Zhu S."/>
            <person name="Zimmer A."/>
            <person name="Hide W."/>
            <person name="Bult C."/>
            <person name="Grimmond S.M."/>
            <person name="Teasdale R.D."/>
            <person name="Liu E.T."/>
            <person name="Brusic V."/>
            <person name="Quackenbush J."/>
            <person name="Wahlestedt C."/>
            <person name="Mattick J.S."/>
            <person name="Hume D.A."/>
            <person name="Kai C."/>
            <person name="Sasaki D."/>
            <person name="Tomaru Y."/>
            <person name="Fukuda S."/>
            <person name="Kanamori-Katayama M."/>
            <person name="Suzuki M."/>
            <person name="Aoki J."/>
            <person name="Arakawa T."/>
            <person name="Iida J."/>
            <person name="Imamura K."/>
            <person name="Itoh M."/>
            <person name="Kato T."/>
            <person name="Kawaji H."/>
            <person name="Kawagashira N."/>
            <person name="Kawashima T."/>
            <person name="Kojima M."/>
            <person name="Kondo S."/>
            <person name="Konno H."/>
            <person name="Nakano K."/>
            <person name="Ninomiya N."/>
            <person name="Nishio T."/>
            <person name="Okada M."/>
            <person name="Plessy C."/>
            <person name="Shibata K."/>
            <person name="Shiraki T."/>
            <person name="Suzuki S."/>
            <person name="Tagami M."/>
            <person name="Waki K."/>
            <person name="Watahiki A."/>
            <person name="Okamura-Oho Y."/>
            <person name="Suzuki H."/>
            <person name="Kawai J."/>
            <person name="Hayashizaki Y."/>
        </authorList>
    </citation>
    <scope>NUCLEOTIDE SEQUENCE [LARGE SCALE MRNA]</scope>
    <source>
        <strain>C57BL/6J</strain>
        <tissue>Inner ear</tissue>
    </source>
</reference>
<reference key="3">
    <citation type="submission" date="2005-07" db="EMBL/GenBank/DDBJ databases">
        <authorList>
            <person name="Mural R.J."/>
            <person name="Adams M.D."/>
            <person name="Myers E.W."/>
            <person name="Smith H.O."/>
            <person name="Venter J.C."/>
        </authorList>
    </citation>
    <scope>NUCLEOTIDE SEQUENCE [LARGE SCALE GENOMIC DNA]</scope>
</reference>
<reference key="4">
    <citation type="journal article" date="2004" name="Genome Res.">
        <title>The status, quality, and expansion of the NIH full-length cDNA project: the Mammalian Gene Collection (MGC).</title>
        <authorList>
            <consortium name="The MGC Project Team"/>
        </authorList>
    </citation>
    <scope>NUCLEOTIDE SEQUENCE [LARGE SCALE MRNA]</scope>
    <source>
        <strain>FVB/N</strain>
        <tissue>Mammary tumor</tissue>
    </source>
</reference>
<reference key="5">
    <citation type="journal article" date="2009" name="FEBS J.">
        <title>The PA-TM-RING protein RING finger protein 13 is an endosomal integral membrane E3 ubiquitin ligase whose RING finger domain is released to the cytoplasm by proteolysis.</title>
        <authorList>
            <person name="Bocock J.P."/>
            <person name="Carmicle S."/>
            <person name="Chhotani S."/>
            <person name="Ruffolo M.R."/>
            <person name="Chu H."/>
            <person name="Erickson A.H."/>
        </authorList>
    </citation>
    <scope>FUNCTION</scope>
    <scope>CATALYTIC ACTIVITY</scope>
    <scope>PATHWAY</scope>
    <scope>SUBCELLULAR LOCATION</scope>
    <scope>TOPOGRAPHY</scope>
    <scope>TISSUE SPECIFICITY</scope>
    <scope>AUTOUBIQUITINATION</scope>
    <scope>GLYCOSYLATION</scope>
    <scope>MUTAGENESIS OF CYS-266</scope>
</reference>
<reference key="6">
    <citation type="journal article" date="2010" name="Traffic">
        <title>Nuclear targeting of an endosomal E3 ubiquitin ligase.</title>
        <authorList>
            <person name="Bocock J.P."/>
            <person name="Carmicle S."/>
            <person name="Madamba E."/>
            <person name="Erickson A.H."/>
        </authorList>
    </citation>
    <scope>SUBCELLULAR LOCATION</scope>
</reference>
<dbReference type="EC" id="2.3.2.27" evidence="5"/>
<dbReference type="EMBL" id="AF037205">
    <property type="protein sequence ID" value="AAC03770.1"/>
    <property type="molecule type" value="mRNA"/>
</dbReference>
<dbReference type="EMBL" id="AF037206">
    <property type="protein sequence ID" value="AAC03771.1"/>
    <property type="molecule type" value="mRNA"/>
</dbReference>
<dbReference type="EMBL" id="AK158046">
    <property type="protein sequence ID" value="BAE34334.1"/>
    <property type="molecule type" value="mRNA"/>
</dbReference>
<dbReference type="EMBL" id="CH466530">
    <property type="protein sequence ID" value="EDL35322.1"/>
    <property type="molecule type" value="Genomic_DNA"/>
</dbReference>
<dbReference type="EMBL" id="CH466530">
    <property type="protein sequence ID" value="EDL35326.1"/>
    <property type="molecule type" value="Genomic_DNA"/>
</dbReference>
<dbReference type="EMBL" id="BC058182">
    <property type="protein sequence ID" value="AAH58182.1"/>
    <property type="molecule type" value="mRNA"/>
</dbReference>
<dbReference type="CCDS" id="CCDS50913.1">
    <molecule id="O54965-1"/>
</dbReference>
<dbReference type="CCDS" id="CCDS79910.1">
    <molecule id="O54965-2"/>
</dbReference>
<dbReference type="RefSeq" id="NP_001106884.1">
    <molecule id="O54965-1"/>
    <property type="nucleotide sequence ID" value="NM_001113413.4"/>
</dbReference>
<dbReference type="RefSeq" id="NP_001344009.1">
    <molecule id="O54965-1"/>
    <property type="nucleotide sequence ID" value="NM_001357080.2"/>
</dbReference>
<dbReference type="RefSeq" id="NP_036013.1">
    <molecule id="O54965-2"/>
    <property type="nucleotide sequence ID" value="NM_011883.6"/>
</dbReference>
<dbReference type="RefSeq" id="XP_006501520.1">
    <property type="nucleotide sequence ID" value="XM_006501457.3"/>
</dbReference>
<dbReference type="SMR" id="O54965"/>
<dbReference type="FunCoup" id="O54965">
    <property type="interactions" value="3886"/>
</dbReference>
<dbReference type="STRING" id="10090.ENSMUSP00000049331"/>
<dbReference type="GlyCosmos" id="O54965">
    <property type="glycosylation" value="1 site, No reported glycans"/>
</dbReference>
<dbReference type="GlyGen" id="O54965">
    <property type="glycosylation" value="2 sites, 1 N-linked glycan (1 site), 1 O-linked glycan (1 site)"/>
</dbReference>
<dbReference type="iPTMnet" id="O54965"/>
<dbReference type="PhosphoSitePlus" id="O54965"/>
<dbReference type="PaxDb" id="10090-ENSMUSP00000049331"/>
<dbReference type="PeptideAtlas" id="O54965"/>
<dbReference type="ProteomicsDB" id="300553">
    <molecule id="O54965-1"/>
</dbReference>
<dbReference type="ProteomicsDB" id="300554">
    <molecule id="O54965-2"/>
</dbReference>
<dbReference type="Pumba" id="O54965"/>
<dbReference type="Antibodypedia" id="2251">
    <property type="antibodies" value="134 antibodies from 27 providers"/>
</dbReference>
<dbReference type="DNASU" id="24017"/>
<dbReference type="Ensembl" id="ENSMUST00000041826.14">
    <molecule id="O54965-1"/>
    <property type="protein sequence ID" value="ENSMUSP00000049331.10"/>
    <property type="gene ID" value="ENSMUSG00000036503.14"/>
</dbReference>
<dbReference type="Ensembl" id="ENSMUST00000199041.2">
    <molecule id="O54965-2"/>
    <property type="protein sequence ID" value="ENSMUSP00000142335.2"/>
    <property type="gene ID" value="ENSMUSG00000036503.14"/>
</dbReference>
<dbReference type="GeneID" id="24017"/>
<dbReference type="KEGG" id="mmu:24017"/>
<dbReference type="UCSC" id="uc008phj.3">
    <molecule id="O54965-1"/>
    <property type="organism name" value="mouse"/>
</dbReference>
<dbReference type="AGR" id="MGI:1346341"/>
<dbReference type="CTD" id="11342"/>
<dbReference type="MGI" id="MGI:1346341">
    <property type="gene designation" value="Rnf13"/>
</dbReference>
<dbReference type="VEuPathDB" id="HostDB:ENSMUSG00000036503"/>
<dbReference type="eggNOG" id="KOG4628">
    <property type="taxonomic scope" value="Eukaryota"/>
</dbReference>
<dbReference type="GeneTree" id="ENSGT00940000154942"/>
<dbReference type="InParanoid" id="O54965"/>
<dbReference type="OMA" id="VYTIFTV"/>
<dbReference type="OrthoDB" id="8062037at2759"/>
<dbReference type="PhylomeDB" id="O54965"/>
<dbReference type="TreeFam" id="TF317486"/>
<dbReference type="UniPathway" id="UPA00143"/>
<dbReference type="BioGRID-ORCS" id="24017">
    <property type="hits" value="2 hits in 61 CRISPR screens"/>
</dbReference>
<dbReference type="ChiTaRS" id="Rnf13">
    <property type="organism name" value="mouse"/>
</dbReference>
<dbReference type="PRO" id="PR:O54965"/>
<dbReference type="Proteomes" id="UP000000589">
    <property type="component" value="Chromosome 3"/>
</dbReference>
<dbReference type="RNAct" id="O54965">
    <property type="molecule type" value="protein"/>
</dbReference>
<dbReference type="Bgee" id="ENSMUSG00000036503">
    <property type="expression patterns" value="Expressed in pigmented layer of retina and 258 other cell types or tissues"/>
</dbReference>
<dbReference type="ExpressionAtlas" id="O54965">
    <property type="expression patterns" value="baseline and differential"/>
</dbReference>
<dbReference type="GO" id="GO:0005829">
    <property type="term" value="C:cytosol"/>
    <property type="evidence" value="ECO:0007669"/>
    <property type="project" value="Ensembl"/>
</dbReference>
<dbReference type="GO" id="GO:0005783">
    <property type="term" value="C:endoplasmic reticulum"/>
    <property type="evidence" value="ECO:0000250"/>
    <property type="project" value="UniProtKB"/>
</dbReference>
<dbReference type="GO" id="GO:0005789">
    <property type="term" value="C:endoplasmic reticulum membrane"/>
    <property type="evidence" value="ECO:0007669"/>
    <property type="project" value="UniProtKB-SubCell"/>
</dbReference>
<dbReference type="GO" id="GO:0031902">
    <property type="term" value="C:late endosome membrane"/>
    <property type="evidence" value="ECO:0000314"/>
    <property type="project" value="UniProtKB"/>
</dbReference>
<dbReference type="GO" id="GO:0005765">
    <property type="term" value="C:lysosomal membrane"/>
    <property type="evidence" value="ECO:0000314"/>
    <property type="project" value="UniProtKB"/>
</dbReference>
<dbReference type="GO" id="GO:0005637">
    <property type="term" value="C:nuclear inner membrane"/>
    <property type="evidence" value="ECO:0007669"/>
    <property type="project" value="UniProtKB-SubCell"/>
</dbReference>
<dbReference type="GO" id="GO:0005654">
    <property type="term" value="C:nucleoplasm"/>
    <property type="evidence" value="ECO:0007669"/>
    <property type="project" value="Ensembl"/>
</dbReference>
<dbReference type="GO" id="GO:0008432">
    <property type="term" value="F:JUN kinase binding"/>
    <property type="evidence" value="ECO:0000250"/>
    <property type="project" value="UniProtKB"/>
</dbReference>
<dbReference type="GO" id="GO:0061630">
    <property type="term" value="F:ubiquitin protein ligase activity"/>
    <property type="evidence" value="ECO:0000314"/>
    <property type="project" value="MGI"/>
</dbReference>
<dbReference type="GO" id="GO:0004842">
    <property type="term" value="F:ubiquitin-protein transferase activity"/>
    <property type="evidence" value="ECO:0000314"/>
    <property type="project" value="UniProtKB"/>
</dbReference>
<dbReference type="GO" id="GO:0008270">
    <property type="term" value="F:zinc ion binding"/>
    <property type="evidence" value="ECO:0007669"/>
    <property type="project" value="UniProtKB-KW"/>
</dbReference>
<dbReference type="GO" id="GO:0051640">
    <property type="term" value="P:organelle localization"/>
    <property type="evidence" value="ECO:0007669"/>
    <property type="project" value="Ensembl"/>
</dbReference>
<dbReference type="GO" id="GO:0046330">
    <property type="term" value="P:positive regulation of JNK cascade"/>
    <property type="evidence" value="ECO:0000250"/>
    <property type="project" value="UniProtKB"/>
</dbReference>
<dbReference type="GO" id="GO:0051865">
    <property type="term" value="P:protein autoubiquitination"/>
    <property type="evidence" value="ECO:0000314"/>
    <property type="project" value="UniProtKB"/>
</dbReference>
<dbReference type="CDD" id="cd02123">
    <property type="entry name" value="PA_C_RZF_like"/>
    <property type="match status" value="1"/>
</dbReference>
<dbReference type="CDD" id="cd16796">
    <property type="entry name" value="RING-H2_RNF13"/>
    <property type="match status" value="1"/>
</dbReference>
<dbReference type="FunFam" id="3.50.30.30:FF:000012">
    <property type="entry name" value="E3 ubiquitin-protein ligase RNF13"/>
    <property type="match status" value="1"/>
</dbReference>
<dbReference type="FunFam" id="3.30.40.10:FF:000099">
    <property type="entry name" value="E3 ubiquitin-protein ligase RNF167"/>
    <property type="match status" value="1"/>
</dbReference>
<dbReference type="Gene3D" id="3.50.30.30">
    <property type="match status" value="1"/>
</dbReference>
<dbReference type="Gene3D" id="3.30.40.10">
    <property type="entry name" value="Zinc/RING finger domain, C3HC4 (zinc finger)"/>
    <property type="match status" value="1"/>
</dbReference>
<dbReference type="InterPro" id="IPR051653">
    <property type="entry name" value="E3_ligase_sorting_rcpt"/>
</dbReference>
<dbReference type="InterPro" id="IPR046450">
    <property type="entry name" value="PA_dom_sf"/>
</dbReference>
<dbReference type="InterPro" id="IPR003137">
    <property type="entry name" value="PA_domain"/>
</dbReference>
<dbReference type="InterPro" id="IPR001841">
    <property type="entry name" value="Znf_RING"/>
</dbReference>
<dbReference type="InterPro" id="IPR013083">
    <property type="entry name" value="Znf_RING/FYVE/PHD"/>
</dbReference>
<dbReference type="InterPro" id="IPR044744">
    <property type="entry name" value="ZNRF4/RNF13/RNF167_PA"/>
</dbReference>
<dbReference type="PANTHER" id="PTHR47168:SF1">
    <property type="entry name" value="OS02G0798600 PROTEIN"/>
    <property type="match status" value="1"/>
</dbReference>
<dbReference type="PANTHER" id="PTHR47168">
    <property type="entry name" value="RING ZINC FINGER DOMAIN SUPERFAMILY PROTEIN-RELATED"/>
    <property type="match status" value="1"/>
</dbReference>
<dbReference type="Pfam" id="PF02225">
    <property type="entry name" value="PA"/>
    <property type="match status" value="1"/>
</dbReference>
<dbReference type="Pfam" id="PF13639">
    <property type="entry name" value="zf-RING_2"/>
    <property type="match status" value="1"/>
</dbReference>
<dbReference type="SMART" id="SM00184">
    <property type="entry name" value="RING"/>
    <property type="match status" value="1"/>
</dbReference>
<dbReference type="SUPFAM" id="SSF52025">
    <property type="entry name" value="PA domain"/>
    <property type="match status" value="1"/>
</dbReference>
<dbReference type="SUPFAM" id="SSF57850">
    <property type="entry name" value="RING/U-box"/>
    <property type="match status" value="1"/>
</dbReference>
<dbReference type="PROSITE" id="PS50089">
    <property type="entry name" value="ZF_RING_2"/>
    <property type="match status" value="1"/>
</dbReference>